<protein>
    <recommendedName>
        <fullName>Nudix hydrolase 15, mitochondrial</fullName>
        <shortName>AtNUDT15</shortName>
        <ecNumber>3.6.1.-</ecNumber>
    </recommendedName>
    <alternativeName>
        <fullName>Coenzyme A diphosphatase NUDT15</fullName>
    </alternativeName>
</protein>
<comment type="function">
    <text>Coenzyme A diphosphatase which mediates the cleavage of oxidized CoA. Can use malonyl-CoA, hexanoyl-CoA, lauroyl-CoA, myristoyl-CoA and palmitoyl-CoA as substrates, but not isobutyryl-CoA or propionyl-CoA.</text>
</comment>
<comment type="cofactor">
    <cofactor evidence="1">
        <name>Mg(2+)</name>
        <dbReference type="ChEBI" id="CHEBI:18420"/>
    </cofactor>
    <cofactor evidence="1">
        <name>Mn(2+)</name>
        <dbReference type="ChEBI" id="CHEBI:29035"/>
    </cofactor>
</comment>
<comment type="biophysicochemical properties">
    <kinetics>
        <KM evidence="4">118.7 uM for CoA</KM>
        <Vmax evidence="4">1.4 umol/min/mg enzyme with CoA as substrate</Vmax>
    </kinetics>
</comment>
<comment type="subcellular location">
    <subcellularLocation>
        <location evidence="4">Mitochondrion</location>
    </subcellularLocation>
</comment>
<comment type="alternative products">
    <event type="alternative splicing"/>
    <isoform>
        <id>Q8GYB1-1</id>
        <name>1</name>
        <sequence type="displayed"/>
    </isoform>
    <isoform>
        <id>Q8GYB1-2</id>
        <name>2</name>
        <sequence type="described" ref="VSP_015093"/>
    </isoform>
    <isoform>
        <id>Q8GYB1-3</id>
        <name>3</name>
        <sequence type="described" ref="VSP_037560"/>
    </isoform>
</comment>
<comment type="tissue specificity">
    <text evidence="4">Expressed in roots, leaves, stems and inflorescences.</text>
</comment>
<comment type="disruption phenotype">
    <text evidence="4">No visible phenotype under normal growth conditions.</text>
</comment>
<comment type="miscellaneous">
    <molecule>Isoform 2</molecule>
    <text evidence="6">May be due to an intron retention.</text>
</comment>
<comment type="similarity">
    <text evidence="6">Belongs to the Nudix hydrolase family.</text>
</comment>
<comment type="sequence caution" evidence="6">
    <conflict type="erroneous gene model prediction">
        <sequence resource="EMBL-CDS" id="AAF24540"/>
    </conflict>
</comment>
<proteinExistence type="evidence at protein level"/>
<reference key="1">
    <citation type="journal article" date="2000" name="Nature">
        <title>Sequence and analysis of chromosome 1 of the plant Arabidopsis thaliana.</title>
        <authorList>
            <person name="Theologis A."/>
            <person name="Ecker J.R."/>
            <person name="Palm C.J."/>
            <person name="Federspiel N.A."/>
            <person name="Kaul S."/>
            <person name="White O."/>
            <person name="Alonso J."/>
            <person name="Altafi H."/>
            <person name="Araujo R."/>
            <person name="Bowman C.L."/>
            <person name="Brooks S.Y."/>
            <person name="Buehler E."/>
            <person name="Chan A."/>
            <person name="Chao Q."/>
            <person name="Chen H."/>
            <person name="Cheuk R.F."/>
            <person name="Chin C.W."/>
            <person name="Chung M.K."/>
            <person name="Conn L."/>
            <person name="Conway A.B."/>
            <person name="Conway A.R."/>
            <person name="Creasy T.H."/>
            <person name="Dewar K."/>
            <person name="Dunn P."/>
            <person name="Etgu P."/>
            <person name="Feldblyum T.V."/>
            <person name="Feng J.-D."/>
            <person name="Fong B."/>
            <person name="Fujii C.Y."/>
            <person name="Gill J.E."/>
            <person name="Goldsmith A.D."/>
            <person name="Haas B."/>
            <person name="Hansen N.F."/>
            <person name="Hughes B."/>
            <person name="Huizar L."/>
            <person name="Hunter J.L."/>
            <person name="Jenkins J."/>
            <person name="Johnson-Hopson C."/>
            <person name="Khan S."/>
            <person name="Khaykin E."/>
            <person name="Kim C.J."/>
            <person name="Koo H.L."/>
            <person name="Kremenetskaia I."/>
            <person name="Kurtz D.B."/>
            <person name="Kwan A."/>
            <person name="Lam B."/>
            <person name="Langin-Hooper S."/>
            <person name="Lee A."/>
            <person name="Lee J.M."/>
            <person name="Lenz C.A."/>
            <person name="Li J.H."/>
            <person name="Li Y.-P."/>
            <person name="Lin X."/>
            <person name="Liu S.X."/>
            <person name="Liu Z.A."/>
            <person name="Luros J.S."/>
            <person name="Maiti R."/>
            <person name="Marziali A."/>
            <person name="Militscher J."/>
            <person name="Miranda M."/>
            <person name="Nguyen M."/>
            <person name="Nierman W.C."/>
            <person name="Osborne B.I."/>
            <person name="Pai G."/>
            <person name="Peterson J."/>
            <person name="Pham P.K."/>
            <person name="Rizzo M."/>
            <person name="Rooney T."/>
            <person name="Rowley D."/>
            <person name="Sakano H."/>
            <person name="Salzberg S.L."/>
            <person name="Schwartz J.R."/>
            <person name="Shinn P."/>
            <person name="Southwick A.M."/>
            <person name="Sun H."/>
            <person name="Tallon L.J."/>
            <person name="Tambunga G."/>
            <person name="Toriumi M.J."/>
            <person name="Town C.D."/>
            <person name="Utterback T."/>
            <person name="Van Aken S."/>
            <person name="Vaysberg M."/>
            <person name="Vysotskaia V.S."/>
            <person name="Walker M."/>
            <person name="Wu D."/>
            <person name="Yu G."/>
            <person name="Fraser C.M."/>
            <person name="Venter J.C."/>
            <person name="Davis R.W."/>
        </authorList>
    </citation>
    <scope>NUCLEOTIDE SEQUENCE [LARGE SCALE GENOMIC DNA]</scope>
    <source>
        <strain>cv. Columbia</strain>
    </source>
</reference>
<reference key="2">
    <citation type="journal article" date="2017" name="Plant J.">
        <title>Araport11: a complete reannotation of the Arabidopsis thaliana reference genome.</title>
        <authorList>
            <person name="Cheng C.Y."/>
            <person name="Krishnakumar V."/>
            <person name="Chan A.P."/>
            <person name="Thibaud-Nissen F."/>
            <person name="Schobel S."/>
            <person name="Town C.D."/>
        </authorList>
    </citation>
    <scope>GENOME REANNOTATION</scope>
    <source>
        <strain>cv. Columbia</strain>
    </source>
</reference>
<reference key="3">
    <citation type="journal article" date="2002" name="Science">
        <title>Functional annotation of a full-length Arabidopsis cDNA collection.</title>
        <authorList>
            <person name="Seki M."/>
            <person name="Narusaka M."/>
            <person name="Kamiya A."/>
            <person name="Ishida J."/>
            <person name="Satou M."/>
            <person name="Sakurai T."/>
            <person name="Nakajima M."/>
            <person name="Enju A."/>
            <person name="Akiyama K."/>
            <person name="Oono Y."/>
            <person name="Muramatsu M."/>
            <person name="Hayashizaki Y."/>
            <person name="Kawai J."/>
            <person name="Carninci P."/>
            <person name="Itoh M."/>
            <person name="Ishii Y."/>
            <person name="Arakawa T."/>
            <person name="Shibata K."/>
            <person name="Shinagawa A."/>
            <person name="Shinozaki K."/>
        </authorList>
    </citation>
    <scope>NUCLEOTIDE SEQUENCE [LARGE SCALE MRNA] (ISOFORMS 1 AND 3)</scope>
    <source>
        <strain>cv. Columbia</strain>
    </source>
</reference>
<reference key="4">
    <citation type="journal article" date="2009" name="DNA Res.">
        <title>Analysis of multiple occurrences of alternative splicing events in Arabidopsis thaliana using novel sequenced full-length cDNAs.</title>
        <authorList>
            <person name="Iida K."/>
            <person name="Fukami-Kobayashi K."/>
            <person name="Toyoda A."/>
            <person name="Sakaki Y."/>
            <person name="Kobayashi M."/>
            <person name="Seki M."/>
            <person name="Shinozaki K."/>
        </authorList>
    </citation>
    <scope>NUCLEOTIDE SEQUENCE [LARGE SCALE MRNA] (ISOFORM 1)</scope>
    <source>
        <strain>cv. Columbia</strain>
    </source>
</reference>
<reference key="5">
    <citation type="submission" date="2006-07" db="EMBL/GenBank/DDBJ databases">
        <title>Large-scale analysis of RIKEN Arabidopsis full-length (RAFL) cDNAs.</title>
        <authorList>
            <person name="Totoki Y."/>
            <person name="Seki M."/>
            <person name="Ishida J."/>
            <person name="Nakajima M."/>
            <person name="Enju A."/>
            <person name="Kamiya A."/>
            <person name="Narusaka M."/>
            <person name="Shin-i T."/>
            <person name="Nakagawa M."/>
            <person name="Sakamoto N."/>
            <person name="Oishi K."/>
            <person name="Kohara Y."/>
            <person name="Kobayashi M."/>
            <person name="Toyoda A."/>
            <person name="Sakaki Y."/>
            <person name="Sakurai T."/>
            <person name="Iida K."/>
            <person name="Akiyama K."/>
            <person name="Satou M."/>
            <person name="Toyoda T."/>
            <person name="Konagaya A."/>
            <person name="Carninci P."/>
            <person name="Kawai J."/>
            <person name="Hayashizaki Y."/>
            <person name="Shinozaki K."/>
        </authorList>
    </citation>
    <scope>NUCLEOTIDE SEQUENCE [LARGE SCALE MRNA] (ISOFORM 1)</scope>
    <source>
        <strain>cv. Columbia</strain>
    </source>
</reference>
<reference key="6">
    <citation type="journal article" date="2005" name="J. Biol. Chem.">
        <title>Comprehensive analysis of cytosolic nudix hydrolases in Arabidopsis thaliana.</title>
        <authorList>
            <person name="Ogawa T."/>
            <person name="Ueda Y."/>
            <person name="Yoshimura K."/>
            <person name="Shigeoka S."/>
        </authorList>
    </citation>
    <scope>NOMENCLATURE</scope>
</reference>
<reference key="7">
    <citation type="journal article" date="2008" name="Plant Physiol.">
        <title>Molecular characterization of organelle-type Nudix hydrolases in Arabidopsis.</title>
        <authorList>
            <person name="Ogawa T."/>
            <person name="Yoshimura K."/>
            <person name="Miyake H."/>
            <person name="Ishikawa K."/>
            <person name="Ito D."/>
            <person name="Tanabe N."/>
            <person name="Shigeoka S."/>
        </authorList>
    </citation>
    <scope>SUBCELLULAR LOCATION</scope>
    <scope>TISSUE SPECIFICITY</scope>
    <scope>DISRUPTION PHENOTYPE</scope>
    <scope>BIOPHYSICOCHEMICAL PROPERTIES</scope>
</reference>
<reference key="8">
    <citation type="journal article" date="2012" name="Mol. Cell. Proteomics">
        <title>Comparative large-scale characterisation of plant vs. mammal proteins reveals similar and idiosyncratic N-alpha acetylation features.</title>
        <authorList>
            <person name="Bienvenut W.V."/>
            <person name="Sumpton D."/>
            <person name="Martinez A."/>
            <person name="Lilla S."/>
            <person name="Espagne C."/>
            <person name="Meinnel T."/>
            <person name="Giglione C."/>
        </authorList>
    </citation>
    <scope>ACETYLATION [LARGE SCALE ANALYSIS] AT MET-24</scope>
    <scope>CLEAVAGE OF TRANSIT PEPTIDE [LARGE SCALE ANALYSIS] AFTER SER-23</scope>
    <scope>IDENTIFICATION BY MASS SPECTROMETRY [LARGE SCALE ANALYSIS]</scope>
</reference>
<gene>
    <name type="primary">NUDT15</name>
    <name type="synonym">NUDX15</name>
    <name type="ordered locus">At1g28960</name>
    <name type="ORF">F1K23.16</name>
    <name type="ORF">F1K23.5</name>
</gene>
<sequence length="285" mass="31898">MFLLYRRLPSFARTTTTTLLCKSMEPAITATSSSSFGGGSSRLAALAQQLRQYKPPPSSSFDDSEEMQTDQETAGKVVSQVGFQESIAPLSKDPDRFKPKRAAVLICLFEGDDGDLRVILTKRSSKLSTHSGEVSLPGGKAEEDDKDDGMTATREAEEEIGLDPSLVDVVTSLEPFLSKHLLRVIPVIGILRDKNKFNPIPNPGEVEAVFDAPLEMFLKDENRRSEEREWMGEKYLIHYFDYRTGDKDYMIWGLTAGILIRAASVTYERPPAFIEQCPKFKYPKM</sequence>
<organism>
    <name type="scientific">Arabidopsis thaliana</name>
    <name type="common">Mouse-ear cress</name>
    <dbReference type="NCBI Taxonomy" id="3702"/>
    <lineage>
        <taxon>Eukaryota</taxon>
        <taxon>Viridiplantae</taxon>
        <taxon>Streptophyta</taxon>
        <taxon>Embryophyta</taxon>
        <taxon>Tracheophyta</taxon>
        <taxon>Spermatophyta</taxon>
        <taxon>Magnoliopsida</taxon>
        <taxon>eudicotyledons</taxon>
        <taxon>Gunneridae</taxon>
        <taxon>Pentapetalae</taxon>
        <taxon>rosids</taxon>
        <taxon>malvids</taxon>
        <taxon>Brassicales</taxon>
        <taxon>Brassicaceae</taxon>
        <taxon>Camelineae</taxon>
        <taxon>Arabidopsis</taxon>
    </lineage>
</organism>
<keyword id="KW-0007">Acetylation</keyword>
<keyword id="KW-0025">Alternative splicing</keyword>
<keyword id="KW-0378">Hydrolase</keyword>
<keyword id="KW-0460">Magnesium</keyword>
<keyword id="KW-0464">Manganese</keyword>
<keyword id="KW-0479">Metal-binding</keyword>
<keyword id="KW-0496">Mitochondrion</keyword>
<keyword id="KW-1185">Reference proteome</keyword>
<keyword id="KW-0809">Transit peptide</keyword>
<name>NUD15_ARATH</name>
<evidence type="ECO:0000250" key="1"/>
<evidence type="ECO:0000255" key="2">
    <source>
        <dbReference type="PROSITE-ProRule" id="PRU00794"/>
    </source>
</evidence>
<evidence type="ECO:0000256" key="3">
    <source>
        <dbReference type="SAM" id="MobiDB-lite"/>
    </source>
</evidence>
<evidence type="ECO:0000269" key="4">
    <source>
    </source>
</evidence>
<evidence type="ECO:0000303" key="5">
    <source>
    </source>
</evidence>
<evidence type="ECO:0000305" key="6"/>
<evidence type="ECO:0007744" key="7">
    <source>
    </source>
</evidence>
<feature type="transit peptide" description="Mitochondrion" evidence="7">
    <location>
        <begin position="1"/>
        <end position="23"/>
    </location>
</feature>
<feature type="chain" id="PRO_0000019958" description="Nudix hydrolase 15, mitochondrial">
    <location>
        <begin position="24"/>
        <end position="285"/>
    </location>
</feature>
<feature type="domain" description="Nudix hydrolase" evidence="2">
    <location>
        <begin position="99"/>
        <end position="255"/>
    </location>
</feature>
<feature type="region of interest" description="Disordered" evidence="3">
    <location>
        <begin position="51"/>
        <end position="72"/>
    </location>
</feature>
<feature type="region of interest" description="Disordered" evidence="3">
    <location>
        <begin position="129"/>
        <end position="152"/>
    </location>
</feature>
<feature type="short sequence motif" description="Nudix box">
    <location>
        <begin position="140"/>
        <end position="161"/>
    </location>
</feature>
<feature type="binding site" evidence="1">
    <location>
        <position position="155"/>
    </location>
    <ligand>
        <name>Mg(2+)</name>
        <dbReference type="ChEBI" id="CHEBI:18420"/>
    </ligand>
</feature>
<feature type="binding site" evidence="1">
    <location>
        <position position="159"/>
    </location>
    <ligand>
        <name>Mg(2+)</name>
        <dbReference type="ChEBI" id="CHEBI:18420"/>
    </ligand>
</feature>
<feature type="modified residue" description="N-acetylmethionine" evidence="7">
    <location>
        <position position="24"/>
    </location>
</feature>
<feature type="splice variant" id="VSP_015093" description="In isoform 2." evidence="6">
    <location>
        <begin position="254"/>
        <end position="285"/>
    </location>
</feature>
<feature type="splice variant" id="VSP_037560" description="In isoform 3." evidence="5">
    <original>M</original>
    <variation>MVEKHTCMP</variation>
    <location>
        <position position="285"/>
    </location>
</feature>
<feature type="sequence conflict" description="In Ref. 3; BAC42400." evidence="6" ref="3">
    <original>S</original>
    <variation>P</variation>
    <location>
        <position position="264"/>
    </location>
</feature>
<accession>Q8GYB1</accession>
<accession>Q0WKX6</accession>
<accession>Q3E701</accession>
<accession>Q3E702</accession>
<accession>Q67YK3</accession>
<accession>Q9SHQ7</accession>
<dbReference type="EC" id="3.6.1.-"/>
<dbReference type="EMBL" id="AC007508">
    <property type="protein sequence ID" value="AAF24540.2"/>
    <property type="status" value="ALT_SEQ"/>
    <property type="molecule type" value="Genomic_DNA"/>
</dbReference>
<dbReference type="EMBL" id="CP002684">
    <property type="protein sequence ID" value="AEE31022.1"/>
    <property type="molecule type" value="Genomic_DNA"/>
</dbReference>
<dbReference type="EMBL" id="CP002684">
    <property type="protein sequence ID" value="AEE31024.1"/>
    <property type="molecule type" value="Genomic_DNA"/>
</dbReference>
<dbReference type="EMBL" id="CP002684">
    <property type="protein sequence ID" value="AEE31026.1"/>
    <property type="molecule type" value="Genomic_DNA"/>
</dbReference>
<dbReference type="EMBL" id="CP002684">
    <property type="protein sequence ID" value="ANM58454.1"/>
    <property type="molecule type" value="Genomic_DNA"/>
</dbReference>
<dbReference type="EMBL" id="CP002684">
    <property type="protein sequence ID" value="ANM58455.1"/>
    <property type="molecule type" value="Genomic_DNA"/>
</dbReference>
<dbReference type="EMBL" id="AK117752">
    <property type="protein sequence ID" value="BAC42400.1"/>
    <property type="molecule type" value="mRNA"/>
</dbReference>
<dbReference type="EMBL" id="AK175332">
    <property type="protein sequence ID" value="BAD43095.1"/>
    <property type="molecule type" value="mRNA"/>
</dbReference>
<dbReference type="EMBL" id="AK176465">
    <property type="protein sequence ID" value="BAD44228.1"/>
    <property type="molecule type" value="mRNA"/>
</dbReference>
<dbReference type="EMBL" id="AK221329">
    <property type="protein sequence ID" value="BAD94135.1"/>
    <property type="molecule type" value="mRNA"/>
</dbReference>
<dbReference type="EMBL" id="AK228486">
    <property type="protein sequence ID" value="BAF00412.1"/>
    <property type="molecule type" value="mRNA"/>
</dbReference>
<dbReference type="EMBL" id="AK230433">
    <property type="protein sequence ID" value="BAF02231.1"/>
    <property type="molecule type" value="mRNA"/>
</dbReference>
<dbReference type="EMBL" id="AK317052">
    <property type="protein sequence ID" value="BAH19745.1"/>
    <property type="molecule type" value="mRNA"/>
</dbReference>
<dbReference type="RefSeq" id="NP_001031104.1">
    <molecule id="Q8GYB1-3"/>
    <property type="nucleotide sequence ID" value="NM_001036027.2"/>
</dbReference>
<dbReference type="RefSeq" id="NP_001320887.1">
    <molecule id="Q8GYB1-1"/>
    <property type="nucleotide sequence ID" value="NM_001332826.1"/>
</dbReference>
<dbReference type="RefSeq" id="NP_564316.1">
    <molecule id="Q8GYB1-3"/>
    <property type="nucleotide sequence ID" value="NM_102640.3"/>
</dbReference>
<dbReference type="RefSeq" id="NP_849724.1">
    <molecule id="Q8GYB1-1"/>
    <property type="nucleotide sequence ID" value="NM_179393.4"/>
</dbReference>
<dbReference type="RefSeq" id="NP_849725.2">
    <molecule id="Q8GYB1-3"/>
    <property type="nucleotide sequence ID" value="NM_179394.3"/>
</dbReference>
<dbReference type="SMR" id="Q8GYB1"/>
<dbReference type="BioGRID" id="25008">
    <property type="interactions" value="1"/>
</dbReference>
<dbReference type="FunCoup" id="Q8GYB1">
    <property type="interactions" value="1258"/>
</dbReference>
<dbReference type="STRING" id="3702.Q8GYB1"/>
<dbReference type="iPTMnet" id="Q8GYB1"/>
<dbReference type="PaxDb" id="3702-AT1G28960.1"/>
<dbReference type="ProteomicsDB" id="250525">
    <molecule id="Q8GYB1-1"/>
</dbReference>
<dbReference type="EnsemblPlants" id="AT1G28960.1">
    <molecule id="Q8GYB1-3"/>
    <property type="protein sequence ID" value="AT1G28960.1"/>
    <property type="gene ID" value="AT1G28960"/>
</dbReference>
<dbReference type="EnsemblPlants" id="AT1G28960.3">
    <molecule id="Q8GYB1-3"/>
    <property type="protein sequence ID" value="AT1G28960.3"/>
    <property type="gene ID" value="AT1G28960"/>
</dbReference>
<dbReference type="EnsemblPlants" id="AT1G28960.5">
    <molecule id="Q8GYB1-3"/>
    <property type="protein sequence ID" value="AT1G28960.5"/>
    <property type="gene ID" value="AT1G28960"/>
</dbReference>
<dbReference type="EnsemblPlants" id="AT1G28960.6">
    <molecule id="Q8GYB1-1"/>
    <property type="protein sequence ID" value="AT1G28960.6"/>
    <property type="gene ID" value="AT1G28960"/>
</dbReference>
<dbReference type="EnsemblPlants" id="AT1G28960.7">
    <molecule id="Q8GYB1-1"/>
    <property type="protein sequence ID" value="AT1G28960.7"/>
    <property type="gene ID" value="AT1G28960"/>
</dbReference>
<dbReference type="GeneID" id="839773"/>
<dbReference type="Gramene" id="AT1G28960.1">
    <molecule id="Q8GYB1-3"/>
    <property type="protein sequence ID" value="AT1G28960.1"/>
    <property type="gene ID" value="AT1G28960"/>
</dbReference>
<dbReference type="Gramene" id="AT1G28960.3">
    <molecule id="Q8GYB1-3"/>
    <property type="protein sequence ID" value="AT1G28960.3"/>
    <property type="gene ID" value="AT1G28960"/>
</dbReference>
<dbReference type="Gramene" id="AT1G28960.5">
    <molecule id="Q8GYB1-3"/>
    <property type="protein sequence ID" value="AT1G28960.5"/>
    <property type="gene ID" value="AT1G28960"/>
</dbReference>
<dbReference type="Gramene" id="AT1G28960.6">
    <molecule id="Q8GYB1-1"/>
    <property type="protein sequence ID" value="AT1G28960.6"/>
    <property type="gene ID" value="AT1G28960"/>
</dbReference>
<dbReference type="Gramene" id="AT1G28960.7">
    <molecule id="Q8GYB1-1"/>
    <property type="protein sequence ID" value="AT1G28960.7"/>
    <property type="gene ID" value="AT1G28960"/>
</dbReference>
<dbReference type="KEGG" id="ath:AT1G28960"/>
<dbReference type="Araport" id="AT1G28960"/>
<dbReference type="TAIR" id="AT1G28960">
    <property type="gene designation" value="NUDX15"/>
</dbReference>
<dbReference type="eggNOG" id="KOG3069">
    <property type="taxonomic scope" value="Eukaryota"/>
</dbReference>
<dbReference type="HOGENOM" id="CLU_040940_8_0_1"/>
<dbReference type="InParanoid" id="Q8GYB1"/>
<dbReference type="OMA" id="HSFHFVD"/>
<dbReference type="PhylomeDB" id="Q8GYB1"/>
<dbReference type="SABIO-RK" id="Q8GYB1"/>
<dbReference type="PRO" id="PR:Q8GYB1"/>
<dbReference type="Proteomes" id="UP000006548">
    <property type="component" value="Chromosome 1"/>
</dbReference>
<dbReference type="ExpressionAtlas" id="Q8GYB1">
    <property type="expression patterns" value="baseline and differential"/>
</dbReference>
<dbReference type="GO" id="GO:0005739">
    <property type="term" value="C:mitochondrion"/>
    <property type="evidence" value="ECO:0000314"/>
    <property type="project" value="TAIR"/>
</dbReference>
<dbReference type="GO" id="GO:0010945">
    <property type="term" value="F:coenzyme A diphosphatase activity"/>
    <property type="evidence" value="ECO:0000314"/>
    <property type="project" value="TAIR"/>
</dbReference>
<dbReference type="GO" id="GO:0008893">
    <property type="term" value="F:guanosine-3',5'-bis(diphosphate) 3'-diphosphatase activity"/>
    <property type="evidence" value="ECO:0000314"/>
    <property type="project" value="TAIR"/>
</dbReference>
<dbReference type="GO" id="GO:0046872">
    <property type="term" value="F:metal ion binding"/>
    <property type="evidence" value="ECO:0007669"/>
    <property type="project" value="UniProtKB-KW"/>
</dbReference>
<dbReference type="GO" id="GO:0015937">
    <property type="term" value="P:coenzyme A biosynthetic process"/>
    <property type="evidence" value="ECO:0000314"/>
    <property type="project" value="TAIR"/>
</dbReference>
<dbReference type="GO" id="GO:0006753">
    <property type="term" value="P:nucleoside phosphate metabolic process"/>
    <property type="evidence" value="ECO:0000314"/>
    <property type="project" value="TAIR"/>
</dbReference>
<dbReference type="GO" id="GO:0006104">
    <property type="term" value="P:succinyl-CoA metabolic process"/>
    <property type="evidence" value="ECO:0000314"/>
    <property type="project" value="TAIR"/>
</dbReference>
<dbReference type="CDD" id="cd03426">
    <property type="entry name" value="NUDIX_CoAse_Nudt7"/>
    <property type="match status" value="1"/>
</dbReference>
<dbReference type="FunFam" id="3.90.79.10:FF:000036">
    <property type="entry name" value="Nudix hydrolase 11"/>
    <property type="match status" value="1"/>
</dbReference>
<dbReference type="Gene3D" id="3.90.79.10">
    <property type="entry name" value="Nucleoside Triphosphate Pyrophosphohydrolase"/>
    <property type="match status" value="1"/>
</dbReference>
<dbReference type="InterPro" id="IPR045121">
    <property type="entry name" value="CoAse"/>
</dbReference>
<dbReference type="InterPro" id="IPR015797">
    <property type="entry name" value="NUDIX_hydrolase-like_dom_sf"/>
</dbReference>
<dbReference type="InterPro" id="IPR030674">
    <property type="entry name" value="Nudix_hydrolase_AtNUDT22"/>
</dbReference>
<dbReference type="InterPro" id="IPR000086">
    <property type="entry name" value="NUDIX_hydrolase_dom"/>
</dbReference>
<dbReference type="PANTHER" id="PTHR12992">
    <property type="entry name" value="NUDIX HYDROLASE"/>
    <property type="match status" value="1"/>
</dbReference>
<dbReference type="PANTHER" id="PTHR12992:SF43">
    <property type="entry name" value="NUDIX HYDROLASE 15, MITOCHONDRIAL"/>
    <property type="match status" value="1"/>
</dbReference>
<dbReference type="Pfam" id="PF00293">
    <property type="entry name" value="NUDIX"/>
    <property type="match status" value="1"/>
</dbReference>
<dbReference type="PIRSF" id="PIRSF038132">
    <property type="entry name" value="Nudix_hydrolase_AtNUDT22"/>
    <property type="match status" value="1"/>
</dbReference>
<dbReference type="SUPFAM" id="SSF55811">
    <property type="entry name" value="Nudix"/>
    <property type="match status" value="1"/>
</dbReference>
<dbReference type="PROSITE" id="PS51462">
    <property type="entry name" value="NUDIX"/>
    <property type="match status" value="1"/>
</dbReference>